<protein>
    <recommendedName>
        <fullName evidence="1">3-methyl-2-oxobutanoate hydroxymethyltransferase</fullName>
        <ecNumber evidence="1">2.1.2.11</ecNumber>
    </recommendedName>
    <alternativeName>
        <fullName evidence="1">Ketopantoate hydroxymethyltransferase</fullName>
        <shortName evidence="1">KPHMT</shortName>
    </alternativeName>
</protein>
<evidence type="ECO:0000255" key="1">
    <source>
        <dbReference type="HAMAP-Rule" id="MF_00156"/>
    </source>
</evidence>
<sequence>MKKVTTSTLLKMKQQSEKISALTAYDASFSKLFDEQGIDVLLIGDSLGMVLQGCDDTLGVSIDDVAYHTRAVRKGVERAFVIADMPFMSYSTPEQTYLNAAKLMAAGASMVKLEGGRWLLESIQGLNERGVPVCGHLGLTPQSVHVFGGFKVQGRDDLQAEQMLEQAKEMAAAGIQLLVLECVPTELAGAISQAVDIPVIGIGAGPETDGQILVMHDMFGISANYMPKFSKNYLQETGDMRTAVSQYIEEVKDGSFPSEAHSFSK</sequence>
<comment type="function">
    <text evidence="1">Catalyzes the reversible reaction in which hydroxymethyl group from 5,10-methylenetetrahydrofolate is transferred onto alpha-ketoisovalerate to form ketopantoate.</text>
</comment>
<comment type="catalytic activity">
    <reaction evidence="1">
        <text>3-methyl-2-oxobutanoate + (6R)-5,10-methylene-5,6,7,8-tetrahydrofolate + H2O = 2-dehydropantoate + (6S)-5,6,7,8-tetrahydrofolate</text>
        <dbReference type="Rhea" id="RHEA:11824"/>
        <dbReference type="ChEBI" id="CHEBI:11561"/>
        <dbReference type="ChEBI" id="CHEBI:11851"/>
        <dbReference type="ChEBI" id="CHEBI:15377"/>
        <dbReference type="ChEBI" id="CHEBI:15636"/>
        <dbReference type="ChEBI" id="CHEBI:57453"/>
        <dbReference type="EC" id="2.1.2.11"/>
    </reaction>
</comment>
<comment type="cofactor">
    <cofactor evidence="1">
        <name>Mg(2+)</name>
        <dbReference type="ChEBI" id="CHEBI:18420"/>
    </cofactor>
    <text evidence="1">Binds 1 Mg(2+) ion per subunit.</text>
</comment>
<comment type="pathway">
    <text evidence="1">Cofactor biosynthesis; (R)-pantothenate biosynthesis; (R)-pantoate from 3-methyl-2-oxobutanoate: step 1/2.</text>
</comment>
<comment type="subunit">
    <text evidence="1">Homodecamer; pentamer of dimers.</text>
</comment>
<comment type="subcellular location">
    <subcellularLocation>
        <location evidence="1">Cytoplasm</location>
    </subcellularLocation>
</comment>
<comment type="similarity">
    <text evidence="1">Belongs to the PanB family.</text>
</comment>
<reference key="1">
    <citation type="submission" date="2006-06" db="EMBL/GenBank/DDBJ databases">
        <title>Complete sequence of Pseudoalteromonas atlantica T6c.</title>
        <authorList>
            <consortium name="US DOE Joint Genome Institute"/>
            <person name="Copeland A."/>
            <person name="Lucas S."/>
            <person name="Lapidus A."/>
            <person name="Barry K."/>
            <person name="Detter J.C."/>
            <person name="Glavina del Rio T."/>
            <person name="Hammon N."/>
            <person name="Israni S."/>
            <person name="Dalin E."/>
            <person name="Tice H."/>
            <person name="Pitluck S."/>
            <person name="Saunders E."/>
            <person name="Brettin T."/>
            <person name="Bruce D."/>
            <person name="Han C."/>
            <person name="Tapia R."/>
            <person name="Gilna P."/>
            <person name="Schmutz J."/>
            <person name="Larimer F."/>
            <person name="Land M."/>
            <person name="Hauser L."/>
            <person name="Kyrpides N."/>
            <person name="Kim E."/>
            <person name="Karls A.C."/>
            <person name="Bartlett D."/>
            <person name="Higgins B.P."/>
            <person name="Richardson P."/>
        </authorList>
    </citation>
    <scope>NUCLEOTIDE SEQUENCE [LARGE SCALE GENOMIC DNA]</scope>
    <source>
        <strain>T6c / ATCC BAA-1087</strain>
    </source>
</reference>
<keyword id="KW-0963">Cytoplasm</keyword>
<keyword id="KW-0460">Magnesium</keyword>
<keyword id="KW-0479">Metal-binding</keyword>
<keyword id="KW-0566">Pantothenate biosynthesis</keyword>
<keyword id="KW-0808">Transferase</keyword>
<dbReference type="EC" id="2.1.2.11" evidence="1"/>
<dbReference type="EMBL" id="CP000388">
    <property type="protein sequence ID" value="ABG42433.1"/>
    <property type="molecule type" value="Genomic_DNA"/>
</dbReference>
<dbReference type="RefSeq" id="WP_011576639.1">
    <property type="nucleotide sequence ID" value="NC_008228.1"/>
</dbReference>
<dbReference type="SMR" id="Q15NV5"/>
<dbReference type="STRING" id="342610.Patl_3933"/>
<dbReference type="KEGG" id="pat:Patl_3933"/>
<dbReference type="eggNOG" id="COG0413">
    <property type="taxonomic scope" value="Bacteria"/>
</dbReference>
<dbReference type="HOGENOM" id="CLU_036645_1_0_6"/>
<dbReference type="OrthoDB" id="9781789at2"/>
<dbReference type="UniPathway" id="UPA00028">
    <property type="reaction ID" value="UER00003"/>
</dbReference>
<dbReference type="Proteomes" id="UP000001981">
    <property type="component" value="Chromosome"/>
</dbReference>
<dbReference type="GO" id="GO:0005737">
    <property type="term" value="C:cytoplasm"/>
    <property type="evidence" value="ECO:0007669"/>
    <property type="project" value="UniProtKB-SubCell"/>
</dbReference>
<dbReference type="GO" id="GO:0003864">
    <property type="term" value="F:3-methyl-2-oxobutanoate hydroxymethyltransferase activity"/>
    <property type="evidence" value="ECO:0007669"/>
    <property type="project" value="UniProtKB-UniRule"/>
</dbReference>
<dbReference type="GO" id="GO:0000287">
    <property type="term" value="F:magnesium ion binding"/>
    <property type="evidence" value="ECO:0007669"/>
    <property type="project" value="TreeGrafter"/>
</dbReference>
<dbReference type="GO" id="GO:0015940">
    <property type="term" value="P:pantothenate biosynthetic process"/>
    <property type="evidence" value="ECO:0007669"/>
    <property type="project" value="UniProtKB-UniRule"/>
</dbReference>
<dbReference type="CDD" id="cd06557">
    <property type="entry name" value="KPHMT-like"/>
    <property type="match status" value="1"/>
</dbReference>
<dbReference type="FunFam" id="3.20.20.60:FF:000003">
    <property type="entry name" value="3-methyl-2-oxobutanoate hydroxymethyltransferase"/>
    <property type="match status" value="1"/>
</dbReference>
<dbReference type="Gene3D" id="3.20.20.60">
    <property type="entry name" value="Phosphoenolpyruvate-binding domains"/>
    <property type="match status" value="1"/>
</dbReference>
<dbReference type="HAMAP" id="MF_00156">
    <property type="entry name" value="PanB"/>
    <property type="match status" value="1"/>
</dbReference>
<dbReference type="InterPro" id="IPR003700">
    <property type="entry name" value="Pantoate_hydroxy_MeTrfase"/>
</dbReference>
<dbReference type="InterPro" id="IPR015813">
    <property type="entry name" value="Pyrv/PenolPyrv_kinase-like_dom"/>
</dbReference>
<dbReference type="InterPro" id="IPR040442">
    <property type="entry name" value="Pyrv_kinase-like_dom_sf"/>
</dbReference>
<dbReference type="NCBIfam" id="TIGR00222">
    <property type="entry name" value="panB"/>
    <property type="match status" value="1"/>
</dbReference>
<dbReference type="NCBIfam" id="NF001452">
    <property type="entry name" value="PRK00311.1"/>
    <property type="match status" value="1"/>
</dbReference>
<dbReference type="PANTHER" id="PTHR20881">
    <property type="entry name" value="3-METHYL-2-OXOBUTANOATE HYDROXYMETHYLTRANSFERASE"/>
    <property type="match status" value="1"/>
</dbReference>
<dbReference type="PANTHER" id="PTHR20881:SF0">
    <property type="entry name" value="3-METHYL-2-OXOBUTANOATE HYDROXYMETHYLTRANSFERASE"/>
    <property type="match status" value="1"/>
</dbReference>
<dbReference type="Pfam" id="PF02548">
    <property type="entry name" value="Pantoate_transf"/>
    <property type="match status" value="1"/>
</dbReference>
<dbReference type="PIRSF" id="PIRSF000388">
    <property type="entry name" value="Pantoate_hydroxy_MeTrfase"/>
    <property type="match status" value="1"/>
</dbReference>
<dbReference type="SUPFAM" id="SSF51621">
    <property type="entry name" value="Phosphoenolpyruvate/pyruvate domain"/>
    <property type="match status" value="1"/>
</dbReference>
<name>PANB_PSEA6</name>
<accession>Q15NV5</accession>
<organism>
    <name type="scientific">Pseudoalteromonas atlantica (strain T6c / ATCC BAA-1087)</name>
    <dbReference type="NCBI Taxonomy" id="3042615"/>
    <lineage>
        <taxon>Bacteria</taxon>
        <taxon>Pseudomonadati</taxon>
        <taxon>Pseudomonadota</taxon>
        <taxon>Gammaproteobacteria</taxon>
        <taxon>Alteromonadales</taxon>
        <taxon>Alteromonadaceae</taxon>
        <taxon>Paraglaciecola</taxon>
    </lineage>
</organism>
<feature type="chain" id="PRO_0000297331" description="3-methyl-2-oxobutanoate hydroxymethyltransferase">
    <location>
        <begin position="1"/>
        <end position="265"/>
    </location>
</feature>
<feature type="active site" description="Proton acceptor" evidence="1">
    <location>
        <position position="181"/>
    </location>
</feature>
<feature type="binding site" evidence="1">
    <location>
        <begin position="45"/>
        <end position="46"/>
    </location>
    <ligand>
        <name>3-methyl-2-oxobutanoate</name>
        <dbReference type="ChEBI" id="CHEBI:11851"/>
    </ligand>
</feature>
<feature type="binding site" evidence="1">
    <location>
        <position position="45"/>
    </location>
    <ligand>
        <name>Mg(2+)</name>
        <dbReference type="ChEBI" id="CHEBI:18420"/>
    </ligand>
</feature>
<feature type="binding site" evidence="1">
    <location>
        <position position="84"/>
    </location>
    <ligand>
        <name>3-methyl-2-oxobutanoate</name>
        <dbReference type="ChEBI" id="CHEBI:11851"/>
    </ligand>
</feature>
<feature type="binding site" evidence="1">
    <location>
        <position position="84"/>
    </location>
    <ligand>
        <name>Mg(2+)</name>
        <dbReference type="ChEBI" id="CHEBI:18420"/>
    </ligand>
</feature>
<feature type="binding site" evidence="1">
    <location>
        <position position="112"/>
    </location>
    <ligand>
        <name>3-methyl-2-oxobutanoate</name>
        <dbReference type="ChEBI" id="CHEBI:11851"/>
    </ligand>
</feature>
<feature type="binding site" evidence="1">
    <location>
        <position position="114"/>
    </location>
    <ligand>
        <name>Mg(2+)</name>
        <dbReference type="ChEBI" id="CHEBI:18420"/>
    </ligand>
</feature>
<proteinExistence type="inferred from homology"/>
<gene>
    <name evidence="1" type="primary">panB</name>
    <name type="ordered locus">Patl_3933</name>
</gene>